<reference key="1">
    <citation type="journal article" date="2004" name="Nat. Biotechnol.">
        <title>Complete genome sequence of the metabolically versatile photosynthetic bacterium Rhodopseudomonas palustris.</title>
        <authorList>
            <person name="Larimer F.W."/>
            <person name="Chain P."/>
            <person name="Hauser L."/>
            <person name="Lamerdin J.E."/>
            <person name="Malfatti S."/>
            <person name="Do L."/>
            <person name="Land M.L."/>
            <person name="Pelletier D.A."/>
            <person name="Beatty J.T."/>
            <person name="Lang A.S."/>
            <person name="Tabita F.R."/>
            <person name="Gibson J.L."/>
            <person name="Hanson T.E."/>
            <person name="Bobst C."/>
            <person name="Torres y Torres J.L."/>
            <person name="Peres C."/>
            <person name="Harrison F.H."/>
            <person name="Gibson J."/>
            <person name="Harwood C.S."/>
        </authorList>
    </citation>
    <scope>NUCLEOTIDE SEQUENCE [LARGE SCALE GENOMIC DNA]</scope>
    <source>
        <strain>ATCC BAA-98 / CGA009</strain>
    </source>
</reference>
<dbReference type="EC" id="7.1.1.-" evidence="1"/>
<dbReference type="EMBL" id="BX572602">
    <property type="protein sequence ID" value="CAE28383.1"/>
    <property type="molecule type" value="Genomic_DNA"/>
</dbReference>
<dbReference type="SMR" id="Q6N5N2"/>
<dbReference type="STRING" id="258594.RPA2942"/>
<dbReference type="eggNOG" id="COG1143">
    <property type="taxonomic scope" value="Bacteria"/>
</dbReference>
<dbReference type="HOGENOM" id="CLU_067218_5_1_5"/>
<dbReference type="PhylomeDB" id="Q6N5N2"/>
<dbReference type="GO" id="GO:0005886">
    <property type="term" value="C:plasma membrane"/>
    <property type="evidence" value="ECO:0007669"/>
    <property type="project" value="UniProtKB-SubCell"/>
</dbReference>
<dbReference type="GO" id="GO:0051539">
    <property type="term" value="F:4 iron, 4 sulfur cluster binding"/>
    <property type="evidence" value="ECO:0007669"/>
    <property type="project" value="UniProtKB-KW"/>
</dbReference>
<dbReference type="GO" id="GO:0005506">
    <property type="term" value="F:iron ion binding"/>
    <property type="evidence" value="ECO:0007669"/>
    <property type="project" value="UniProtKB-UniRule"/>
</dbReference>
<dbReference type="GO" id="GO:0050136">
    <property type="term" value="F:NADH:ubiquinone reductase (non-electrogenic) activity"/>
    <property type="evidence" value="ECO:0007669"/>
    <property type="project" value="UniProtKB-UniRule"/>
</dbReference>
<dbReference type="GO" id="GO:0048038">
    <property type="term" value="F:quinone binding"/>
    <property type="evidence" value="ECO:0007669"/>
    <property type="project" value="UniProtKB-KW"/>
</dbReference>
<dbReference type="GO" id="GO:0009060">
    <property type="term" value="P:aerobic respiration"/>
    <property type="evidence" value="ECO:0007669"/>
    <property type="project" value="TreeGrafter"/>
</dbReference>
<dbReference type="FunFam" id="3.30.70.3270:FF:000001">
    <property type="entry name" value="NADH-quinone oxidoreductase subunit I 1"/>
    <property type="match status" value="1"/>
</dbReference>
<dbReference type="Gene3D" id="3.30.70.3270">
    <property type="match status" value="1"/>
</dbReference>
<dbReference type="HAMAP" id="MF_01351">
    <property type="entry name" value="NDH1_NuoI"/>
    <property type="match status" value="1"/>
</dbReference>
<dbReference type="InterPro" id="IPR017896">
    <property type="entry name" value="4Fe4S_Fe-S-bd"/>
</dbReference>
<dbReference type="InterPro" id="IPR017900">
    <property type="entry name" value="4Fe4S_Fe_S_CS"/>
</dbReference>
<dbReference type="InterPro" id="IPR010226">
    <property type="entry name" value="NADH_quinone_OxRdtase_chainI"/>
</dbReference>
<dbReference type="NCBIfam" id="TIGR01971">
    <property type="entry name" value="NuoI"/>
    <property type="match status" value="1"/>
</dbReference>
<dbReference type="NCBIfam" id="NF004538">
    <property type="entry name" value="PRK05888.1-4"/>
    <property type="match status" value="1"/>
</dbReference>
<dbReference type="NCBIfam" id="NF004539">
    <property type="entry name" value="PRK05888.1-5"/>
    <property type="match status" value="1"/>
</dbReference>
<dbReference type="PANTHER" id="PTHR10849:SF20">
    <property type="entry name" value="NADH DEHYDROGENASE [UBIQUINONE] IRON-SULFUR PROTEIN 8, MITOCHONDRIAL"/>
    <property type="match status" value="1"/>
</dbReference>
<dbReference type="PANTHER" id="PTHR10849">
    <property type="entry name" value="NADH DEHYDROGENASE UBIQUINONE IRON-SULFUR PROTEIN 8, MITOCHONDRIAL"/>
    <property type="match status" value="1"/>
</dbReference>
<dbReference type="Pfam" id="PF12838">
    <property type="entry name" value="Fer4_7"/>
    <property type="match status" value="1"/>
</dbReference>
<dbReference type="SUPFAM" id="SSF54862">
    <property type="entry name" value="4Fe-4S ferredoxins"/>
    <property type="match status" value="1"/>
</dbReference>
<dbReference type="PROSITE" id="PS00198">
    <property type="entry name" value="4FE4S_FER_1"/>
    <property type="match status" value="2"/>
</dbReference>
<dbReference type="PROSITE" id="PS51379">
    <property type="entry name" value="4FE4S_FER_2"/>
    <property type="match status" value="2"/>
</dbReference>
<name>NUOI1_RHOPA</name>
<comment type="function">
    <text evidence="1">NDH-1 shuttles electrons from NADH, via FMN and iron-sulfur (Fe-S) centers, to quinones in the respiratory chain. The immediate electron acceptor for the enzyme in this species is believed to be ubiquinone. Couples the redox reaction to proton translocation (for every two electrons transferred, four hydrogen ions are translocated across the cytoplasmic membrane), and thus conserves the redox energy in a proton gradient.</text>
</comment>
<comment type="catalytic activity">
    <reaction evidence="1">
        <text>a quinone + NADH + 5 H(+)(in) = a quinol + NAD(+) + 4 H(+)(out)</text>
        <dbReference type="Rhea" id="RHEA:57888"/>
        <dbReference type="ChEBI" id="CHEBI:15378"/>
        <dbReference type="ChEBI" id="CHEBI:24646"/>
        <dbReference type="ChEBI" id="CHEBI:57540"/>
        <dbReference type="ChEBI" id="CHEBI:57945"/>
        <dbReference type="ChEBI" id="CHEBI:132124"/>
    </reaction>
</comment>
<comment type="cofactor">
    <cofactor evidence="1">
        <name>[4Fe-4S] cluster</name>
        <dbReference type="ChEBI" id="CHEBI:49883"/>
    </cofactor>
    <text evidence="1">Binds 2 [4Fe-4S] clusters per subunit.</text>
</comment>
<comment type="subunit">
    <text evidence="1">NDH-1 is composed of 14 different subunits. Subunits NuoA, H, J, K, L, M, N constitute the membrane sector of the complex.</text>
</comment>
<comment type="subcellular location">
    <subcellularLocation>
        <location evidence="1">Cell inner membrane</location>
        <topology evidence="1">Peripheral membrane protein</topology>
    </subcellularLocation>
</comment>
<comment type="similarity">
    <text evidence="1">Belongs to the complex I 23 kDa subunit family.</text>
</comment>
<feature type="chain" id="PRO_0000250936" description="NADH-quinone oxidoreductase subunit I 1">
    <location>
        <begin position="1"/>
        <end position="162"/>
    </location>
</feature>
<feature type="domain" description="4Fe-4S ferredoxin-type 1" evidence="1">
    <location>
        <begin position="52"/>
        <end position="82"/>
    </location>
</feature>
<feature type="domain" description="4Fe-4S ferredoxin-type 2" evidence="1">
    <location>
        <begin position="93"/>
        <end position="122"/>
    </location>
</feature>
<feature type="binding site" evidence="1">
    <location>
        <position position="62"/>
    </location>
    <ligand>
        <name>[4Fe-4S] cluster</name>
        <dbReference type="ChEBI" id="CHEBI:49883"/>
        <label>1</label>
    </ligand>
</feature>
<feature type="binding site" evidence="1">
    <location>
        <position position="65"/>
    </location>
    <ligand>
        <name>[4Fe-4S] cluster</name>
        <dbReference type="ChEBI" id="CHEBI:49883"/>
        <label>1</label>
    </ligand>
</feature>
<feature type="binding site" evidence="1">
    <location>
        <position position="68"/>
    </location>
    <ligand>
        <name>[4Fe-4S] cluster</name>
        <dbReference type="ChEBI" id="CHEBI:49883"/>
        <label>1</label>
    </ligand>
</feature>
<feature type="binding site" evidence="1">
    <location>
        <position position="72"/>
    </location>
    <ligand>
        <name>[4Fe-4S] cluster</name>
        <dbReference type="ChEBI" id="CHEBI:49883"/>
        <label>2</label>
    </ligand>
</feature>
<feature type="binding site" evidence="1">
    <location>
        <position position="102"/>
    </location>
    <ligand>
        <name>[4Fe-4S] cluster</name>
        <dbReference type="ChEBI" id="CHEBI:49883"/>
        <label>2</label>
    </ligand>
</feature>
<feature type="binding site" evidence="1">
    <location>
        <position position="105"/>
    </location>
    <ligand>
        <name>[4Fe-4S] cluster</name>
        <dbReference type="ChEBI" id="CHEBI:49883"/>
        <label>2</label>
    </ligand>
</feature>
<feature type="binding site" evidence="1">
    <location>
        <position position="108"/>
    </location>
    <ligand>
        <name>[4Fe-4S] cluster</name>
        <dbReference type="ChEBI" id="CHEBI:49883"/>
        <label>2</label>
    </ligand>
</feature>
<feature type="binding site" evidence="1">
    <location>
        <position position="112"/>
    </location>
    <ligand>
        <name>[4Fe-4S] cluster</name>
        <dbReference type="ChEBI" id="CHEBI:49883"/>
        <label>1</label>
    </ligand>
</feature>
<keyword id="KW-0004">4Fe-4S</keyword>
<keyword id="KW-0997">Cell inner membrane</keyword>
<keyword id="KW-1003">Cell membrane</keyword>
<keyword id="KW-0408">Iron</keyword>
<keyword id="KW-0411">Iron-sulfur</keyword>
<keyword id="KW-0472">Membrane</keyword>
<keyword id="KW-0479">Metal-binding</keyword>
<keyword id="KW-0520">NAD</keyword>
<keyword id="KW-0874">Quinone</keyword>
<keyword id="KW-0677">Repeat</keyword>
<keyword id="KW-1278">Translocase</keyword>
<keyword id="KW-0830">Ubiquinone</keyword>
<gene>
    <name evidence="1" type="primary">nuoI1</name>
    <name type="ordered locus">RPA2942</name>
</gene>
<protein>
    <recommendedName>
        <fullName evidence="1">NADH-quinone oxidoreductase subunit I 1</fullName>
        <ecNumber evidence="1">7.1.1.-</ecNumber>
    </recommendedName>
    <alternativeName>
        <fullName evidence="1">NADH dehydrogenase I subunit I 1</fullName>
    </alternativeName>
    <alternativeName>
        <fullName evidence="1">NDH-1 subunit I 1</fullName>
    </alternativeName>
</protein>
<organism>
    <name type="scientific">Rhodopseudomonas palustris (strain ATCC BAA-98 / CGA009)</name>
    <dbReference type="NCBI Taxonomy" id="258594"/>
    <lineage>
        <taxon>Bacteria</taxon>
        <taxon>Pseudomonadati</taxon>
        <taxon>Pseudomonadota</taxon>
        <taxon>Alphaproteobacteria</taxon>
        <taxon>Hyphomicrobiales</taxon>
        <taxon>Nitrobacteraceae</taxon>
        <taxon>Rhodopseudomonas</taxon>
    </lineage>
</organism>
<accession>Q6N5N2</accession>
<proteinExistence type="inferred from homology"/>
<sequence length="162" mass="18649">MNVTATARSLLLTEFVSAFFLAMRYFFKPKPTINYPFEKNPISPRFRGEHALRRYPNGEERCIACKLCEAVCPAQAITIEAGPRRNDGTRRTVRYDIDMVKCIYCGFCQEACPVDAIVEGPNFEFATETREELYYDKARLLANGDRWEREIAKAISLDAPYR</sequence>
<evidence type="ECO:0000255" key="1">
    <source>
        <dbReference type="HAMAP-Rule" id="MF_01351"/>
    </source>
</evidence>